<gene>
    <name type="primary">gli3</name>
</gene>
<evidence type="ECO:0000250" key="1"/>
<evidence type="ECO:0000255" key="2">
    <source>
        <dbReference type="PROSITE-ProRule" id="PRU00042"/>
    </source>
</evidence>
<evidence type="ECO:0000256" key="3">
    <source>
        <dbReference type="SAM" id="MobiDB-lite"/>
    </source>
</evidence>
<evidence type="ECO:0000305" key="4"/>
<protein>
    <recommendedName>
        <fullName>Zinc finger protein GLI3</fullName>
    </recommendedName>
    <alternativeName>
        <fullName>Neural-specific DNA-binding protein xGLI3</fullName>
        <shortName>xGLI-3</shortName>
    </alternativeName>
</protein>
<accession>Q91660</accession>
<reference key="1">
    <citation type="journal article" date="1997" name="Mech. Dev.">
        <title>A role for Xenopus Gli-type zinc finger proteins in the early embryonic patterning of mesoderm and neuroectoderm.</title>
        <authorList>
            <person name="Marine J.C."/>
            <person name="Bellefroid E.J."/>
            <person name="Pendeville H."/>
            <person name="Martial J.A."/>
            <person name="Pieler T."/>
        </authorList>
    </citation>
    <scope>NUCLEOTIDE SEQUENCE [MRNA]</scope>
</reference>
<sequence>MEAQSRSTTASEKKKVENSIVKGHSRTEVSEKAVASSTTSNEDESPGQTYHRERRNAIAMQPQGGQGLGKISEEPSTSSEERASLIKKELHGSITHLPEPSVPYRGTVFAMDPRNGYIDPHYRSDLDLFPAFHPPVPIDARHHEGRYHYEPTPIPPLHVPTALASSPTYPDLPFFRISPHRNPASASDSPFSPPHPYISPYMDYIRSLHSSPSLSMISAARGLSPTDVPHAGISPAEYYHQMALLAGQRSPYADIFPSPATAGAGANALHMEYLHAMESSRFSSPRLSARPSRKRTLSISPLSDHSFDLQTMIRNSPNSLVTILNNSRSSSSASGSYGHLAASAISPALNFAYQPTPVSLQQMHQQIMSRQHSIGSAFGHSPPLLHPAPTFPSQRTIPGIPSVLNPVQVSIGPSEAAQQNKPTSESAVSSTGDLLHNKRSKVKPEEDHPSPGAVCIQDQPDGMTLVKEEGVKDESKQEAEVVYETNCHWEGCSREFDTQEQLVHHINNDHIHGEKKEFVCRWLDCSREQKPFKAQYMLVVHMRRHTGEKPHKCTFEGCSKAYSRLENLKTHLRSHTGEKPYVCEHEGCNKAFSNASDRAKHQNRTHSNEKPYVCKIPGCTKRYTDPSSLRKHVKTVHGPEAHVTKKQRGDIHPRPPPPREPGSHSQSRSPGQQTQGIHGEHKDLSNTTSKHEECLQVRSVKTEKPMSSQPSPGGKSSCSRQQSPISNYTNSGIELNLNSGGSIGDFSALDETPIMDSTISTATTGLGLHGRRVMTGTKWMEQIKVEKMKQVNGMLPRLNPVPPHRAPTLPPITGNGVQLNSNISLGGLAPVLPNRNDLSSMDITVLNMLNRRDSNTSTISSAYMSSRRSSGISPCFSSRRSSEASQFEGRVQNLSVAGSYDPISTDASRRSSETSQCDGLPTLLSLTPAQQYRLKAKYAAATGGPPPTPLPNMERMSLKTRMALLGDSRDCRLSPLPSVNVPRRCSDGGVGSYGRRHLLPNELQVNGMRRASDPVKMVSDNVSNTRVVRFNSLNNVIPPDVPPPMERRNLSLQNYTRNVYSPCPPSISENVALEAMIMEAEGNFDDEDLLPDDMVQYLNSRNQRLYETIETDALQNNAGERNGNNFEQSHVTSNVINEQFHSSEQTDLIENKNDLPIQWNEVSSGSAEYSPSRLKYGQRFPTQQNQPFGLYNNMMVQQQNVPKSGLSQQRGYQHHTQNNPQAPQQNLDLYNNSNVWSGQLGRGNQYIDDIERSSLGHSATGSLCNSAARGQKLTTNGLPMNTGQQNFGPSTHYSVQSANRAEVVQNENIINQEFMQQMTAEHLIYGMHLLGVTRSNQTTSGQNGNTTDGTRSFLSTTQNGGEQQPTLAKNFQSFVNSSGNSRQNLHRNNLPYLQEQIYDTNQHIFKVNSIKMEMQSHPQQHCANAQNFSGQLYDQTATYPQQIMKSGSEPGMEANCLLQESNNTNSSKLLSPGANHVTSTVDNIDNSLAGVQIAFAAIIDDGDHASLISGVLSPSIIQNLSRNSSRLTTPRASLTFPAIPVSTSNMAIGDMSSLLTSLAEESKFLAIMQ</sequence>
<dbReference type="EMBL" id="U42461">
    <property type="protein sequence ID" value="AAA98466.1"/>
    <property type="molecule type" value="mRNA"/>
</dbReference>
<dbReference type="RefSeq" id="NP_001081440.1">
    <property type="nucleotide sequence ID" value="NM_001087971.1"/>
</dbReference>
<dbReference type="SMR" id="Q91660"/>
<dbReference type="GeneID" id="397837"/>
<dbReference type="KEGG" id="xla:397837"/>
<dbReference type="AGR" id="Xenbase:XB-GENE-865509"/>
<dbReference type="CTD" id="397837"/>
<dbReference type="Xenbase" id="XB-GENE-865509">
    <property type="gene designation" value="gli3.L"/>
</dbReference>
<dbReference type="OrthoDB" id="3214149at2759"/>
<dbReference type="Proteomes" id="UP000186698">
    <property type="component" value="Chromosome 6L"/>
</dbReference>
<dbReference type="Bgee" id="397837">
    <property type="expression patterns" value="Expressed in neurula embryo and 14 other cell types or tissues"/>
</dbReference>
<dbReference type="GO" id="GO:0005737">
    <property type="term" value="C:cytoplasm"/>
    <property type="evidence" value="ECO:0000250"/>
    <property type="project" value="UniProtKB"/>
</dbReference>
<dbReference type="GO" id="GO:0005634">
    <property type="term" value="C:nucleus"/>
    <property type="evidence" value="ECO:0000250"/>
    <property type="project" value="UniProtKB"/>
</dbReference>
<dbReference type="GO" id="GO:0003700">
    <property type="term" value="F:DNA-binding transcription factor activity"/>
    <property type="evidence" value="ECO:0000250"/>
    <property type="project" value="UniProtKB"/>
</dbReference>
<dbReference type="GO" id="GO:0000981">
    <property type="term" value="F:DNA-binding transcription factor activity, RNA polymerase II-specific"/>
    <property type="evidence" value="ECO:0000318"/>
    <property type="project" value="GO_Central"/>
</dbReference>
<dbReference type="GO" id="GO:0000978">
    <property type="term" value="F:RNA polymerase II cis-regulatory region sequence-specific DNA binding"/>
    <property type="evidence" value="ECO:0000318"/>
    <property type="project" value="GO_Central"/>
</dbReference>
<dbReference type="GO" id="GO:0008270">
    <property type="term" value="F:zinc ion binding"/>
    <property type="evidence" value="ECO:0007669"/>
    <property type="project" value="UniProtKB-KW"/>
</dbReference>
<dbReference type="GO" id="GO:0045893">
    <property type="term" value="P:positive regulation of DNA-templated transcription"/>
    <property type="evidence" value="ECO:0000250"/>
    <property type="project" value="UniProtKB"/>
</dbReference>
<dbReference type="GO" id="GO:0006357">
    <property type="term" value="P:regulation of transcription by RNA polymerase II"/>
    <property type="evidence" value="ECO:0000318"/>
    <property type="project" value="GO_Central"/>
</dbReference>
<dbReference type="GO" id="GO:0007224">
    <property type="term" value="P:smoothened signaling pathway"/>
    <property type="evidence" value="ECO:0000318"/>
    <property type="project" value="GO_Central"/>
</dbReference>
<dbReference type="FunFam" id="3.30.160.60:FF:000019">
    <property type="entry name" value="GLI family zinc finger 3"/>
    <property type="match status" value="1"/>
</dbReference>
<dbReference type="FunFam" id="3.30.160.60:FF:000031">
    <property type="entry name" value="GLI family zinc finger 3"/>
    <property type="match status" value="1"/>
</dbReference>
<dbReference type="FunFam" id="3.30.160.60:FF:000036">
    <property type="entry name" value="GLI family zinc finger 3"/>
    <property type="match status" value="1"/>
</dbReference>
<dbReference type="FunFam" id="3.30.160.60:FF:000048">
    <property type="entry name" value="GLI family zinc finger 3"/>
    <property type="match status" value="1"/>
</dbReference>
<dbReference type="FunFam" id="3.30.160.60:FF:000068">
    <property type="entry name" value="GLI family zinc finger 3"/>
    <property type="match status" value="1"/>
</dbReference>
<dbReference type="Gene3D" id="3.30.160.60">
    <property type="entry name" value="Classic Zinc Finger"/>
    <property type="match status" value="5"/>
</dbReference>
<dbReference type="InterPro" id="IPR043359">
    <property type="entry name" value="GLI-like"/>
</dbReference>
<dbReference type="InterPro" id="IPR056436">
    <property type="entry name" value="Znf-C2H2_ZIC1-5/GLI1-3-like"/>
</dbReference>
<dbReference type="InterPro" id="IPR036236">
    <property type="entry name" value="Znf_C2H2_sf"/>
</dbReference>
<dbReference type="InterPro" id="IPR013087">
    <property type="entry name" value="Znf_C2H2_type"/>
</dbReference>
<dbReference type="PANTHER" id="PTHR45718">
    <property type="entry name" value="TRANSCRIPTIONAL ACTIVATOR CUBITUS INTERRUPTUS"/>
    <property type="match status" value="1"/>
</dbReference>
<dbReference type="PANTHER" id="PTHR45718:SF5">
    <property type="entry name" value="TRANSCRIPTIONAL ACTIVATOR GLI3"/>
    <property type="match status" value="1"/>
</dbReference>
<dbReference type="Pfam" id="PF00096">
    <property type="entry name" value="zf-C2H2"/>
    <property type="match status" value="2"/>
</dbReference>
<dbReference type="Pfam" id="PF23561">
    <property type="entry name" value="zf-C2H2_15"/>
    <property type="match status" value="1"/>
</dbReference>
<dbReference type="SMART" id="SM00355">
    <property type="entry name" value="ZnF_C2H2"/>
    <property type="match status" value="5"/>
</dbReference>
<dbReference type="SUPFAM" id="SSF57667">
    <property type="entry name" value="beta-beta-alpha zinc fingers"/>
    <property type="match status" value="3"/>
</dbReference>
<dbReference type="PROSITE" id="PS00028">
    <property type="entry name" value="ZINC_FINGER_C2H2_1"/>
    <property type="match status" value="4"/>
</dbReference>
<dbReference type="PROSITE" id="PS50157">
    <property type="entry name" value="ZINC_FINGER_C2H2_2"/>
    <property type="match status" value="5"/>
</dbReference>
<comment type="function">
    <text evidence="1">Has a dual function as a transcriptional activator and a repressor of the sonic hedgehog (Shh) pathway, and may play a role in limb development. May bind to the minimal GLI-consensus sequence 5'-GGGTGGTC-3' (By similarity). Has an essential role in the early embryonic patterning of mesoderm and neuroectoderm.</text>
</comment>
<comment type="subcellular location">
    <subcellularLocation>
        <location evidence="4">Nucleus</location>
    </subcellularLocation>
    <subcellularLocation>
        <location evidence="1">Cytoplasm</location>
    </subcellularLocation>
</comment>
<comment type="PTM">
    <text evidence="1">Phosphorylation is essential for its proteolytic processing.</text>
</comment>
<comment type="PTM">
    <text evidence="1">The repressor form (GLI3R), a C-terminally truncated form is generated from the full-length GLI3 protein (GLI3FL) through proteolytic processing.</text>
</comment>
<comment type="similarity">
    <text evidence="4">Belongs to the GLI C2H2-type zinc-finger protein family.</text>
</comment>
<organism>
    <name type="scientific">Xenopus laevis</name>
    <name type="common">African clawed frog</name>
    <dbReference type="NCBI Taxonomy" id="8355"/>
    <lineage>
        <taxon>Eukaryota</taxon>
        <taxon>Metazoa</taxon>
        <taxon>Chordata</taxon>
        <taxon>Craniata</taxon>
        <taxon>Vertebrata</taxon>
        <taxon>Euteleostomi</taxon>
        <taxon>Amphibia</taxon>
        <taxon>Batrachia</taxon>
        <taxon>Anura</taxon>
        <taxon>Pipoidea</taxon>
        <taxon>Pipidae</taxon>
        <taxon>Xenopodinae</taxon>
        <taxon>Xenopus</taxon>
        <taxon>Xenopus</taxon>
    </lineage>
</organism>
<feature type="chain" id="PRO_0000047206" description="Zinc finger protein GLI3">
    <location>
        <begin position="1"/>
        <end position="1569"/>
    </location>
</feature>
<feature type="zinc finger region" description="C2H2-type 1" evidence="2">
    <location>
        <begin position="485"/>
        <end position="510"/>
    </location>
</feature>
<feature type="zinc finger region" description="C2H2-type 2" evidence="2">
    <location>
        <begin position="518"/>
        <end position="545"/>
    </location>
</feature>
<feature type="zinc finger region" description="C2H2-type 3" evidence="2">
    <location>
        <begin position="551"/>
        <end position="575"/>
    </location>
</feature>
<feature type="zinc finger region" description="C2H2-type 4" evidence="2">
    <location>
        <begin position="581"/>
        <end position="606"/>
    </location>
</feature>
<feature type="zinc finger region" description="C2H2-type 5" evidence="2">
    <location>
        <begin position="612"/>
        <end position="637"/>
    </location>
</feature>
<feature type="region of interest" description="Disordered" evidence="3">
    <location>
        <begin position="1"/>
        <end position="79"/>
    </location>
</feature>
<feature type="region of interest" description="Disordered" evidence="3">
    <location>
        <begin position="414"/>
        <end position="461"/>
    </location>
</feature>
<feature type="region of interest" description="Disordered" evidence="3">
    <location>
        <begin position="625"/>
        <end position="731"/>
    </location>
</feature>
<feature type="region of interest" description="Disordered" evidence="3">
    <location>
        <begin position="899"/>
        <end position="921"/>
    </location>
</feature>
<feature type="region of interest" description="Disordered" evidence="3">
    <location>
        <begin position="1202"/>
        <end position="1228"/>
    </location>
</feature>
<feature type="region of interest" description="Disordered" evidence="3">
    <location>
        <begin position="1335"/>
        <end position="1364"/>
    </location>
</feature>
<feature type="compositionally biased region" description="Polar residues" evidence="3">
    <location>
        <begin position="1"/>
        <end position="10"/>
    </location>
</feature>
<feature type="compositionally biased region" description="Polar residues" evidence="3">
    <location>
        <begin position="416"/>
        <end position="432"/>
    </location>
</feature>
<feature type="compositionally biased region" description="Basic and acidic residues" evidence="3">
    <location>
        <begin position="637"/>
        <end position="653"/>
    </location>
</feature>
<feature type="compositionally biased region" description="Polar residues" evidence="3">
    <location>
        <begin position="663"/>
        <end position="676"/>
    </location>
</feature>
<feature type="compositionally biased region" description="Basic and acidic residues" evidence="3">
    <location>
        <begin position="678"/>
        <end position="704"/>
    </location>
</feature>
<feature type="compositionally biased region" description="Polar residues" evidence="3">
    <location>
        <begin position="705"/>
        <end position="731"/>
    </location>
</feature>
<feature type="compositionally biased region" description="Low complexity" evidence="3">
    <location>
        <begin position="1335"/>
        <end position="1350"/>
    </location>
</feature>
<feature type="compositionally biased region" description="Polar residues" evidence="3">
    <location>
        <begin position="1352"/>
        <end position="1364"/>
    </location>
</feature>
<keyword id="KW-0010">Activator</keyword>
<keyword id="KW-0963">Cytoplasm</keyword>
<keyword id="KW-0238">DNA-binding</keyword>
<keyword id="KW-0479">Metal-binding</keyword>
<keyword id="KW-0539">Nucleus</keyword>
<keyword id="KW-0597">Phosphoprotein</keyword>
<keyword id="KW-1185">Reference proteome</keyword>
<keyword id="KW-0677">Repeat</keyword>
<keyword id="KW-0678">Repressor</keyword>
<keyword id="KW-0804">Transcription</keyword>
<keyword id="KW-0805">Transcription regulation</keyword>
<keyword id="KW-0862">Zinc</keyword>
<keyword id="KW-0863">Zinc-finger</keyword>
<proteinExistence type="evidence at transcript level"/>
<name>GLI3_XENLA</name>